<name>RSMH_WOLTR</name>
<dbReference type="EC" id="2.1.1.199" evidence="1"/>
<dbReference type="EMBL" id="AE017321">
    <property type="protein sequence ID" value="AAW70699.1"/>
    <property type="molecule type" value="Genomic_DNA"/>
</dbReference>
<dbReference type="RefSeq" id="WP_011256309.1">
    <property type="nucleotide sequence ID" value="NC_006833.1"/>
</dbReference>
<dbReference type="SMR" id="Q5GTH5"/>
<dbReference type="STRING" id="292805.Wbm0107"/>
<dbReference type="KEGG" id="wbm:Wbm0107"/>
<dbReference type="eggNOG" id="COG0275">
    <property type="taxonomic scope" value="Bacteria"/>
</dbReference>
<dbReference type="HOGENOM" id="CLU_038422_1_1_5"/>
<dbReference type="Proteomes" id="UP000000534">
    <property type="component" value="Chromosome"/>
</dbReference>
<dbReference type="GO" id="GO:0005737">
    <property type="term" value="C:cytoplasm"/>
    <property type="evidence" value="ECO:0007669"/>
    <property type="project" value="UniProtKB-SubCell"/>
</dbReference>
<dbReference type="GO" id="GO:0071424">
    <property type="term" value="F:rRNA (cytosine-N4-)-methyltransferase activity"/>
    <property type="evidence" value="ECO:0007669"/>
    <property type="project" value="UniProtKB-UniRule"/>
</dbReference>
<dbReference type="GO" id="GO:0070475">
    <property type="term" value="P:rRNA base methylation"/>
    <property type="evidence" value="ECO:0007669"/>
    <property type="project" value="UniProtKB-UniRule"/>
</dbReference>
<dbReference type="FunFam" id="1.10.150.170:FF:000003">
    <property type="entry name" value="Ribosomal RNA small subunit methyltransferase H"/>
    <property type="match status" value="1"/>
</dbReference>
<dbReference type="Gene3D" id="1.10.150.170">
    <property type="entry name" value="Putative methyltransferase TM0872, insert domain"/>
    <property type="match status" value="1"/>
</dbReference>
<dbReference type="Gene3D" id="3.40.50.150">
    <property type="entry name" value="Vaccinia Virus protein VP39"/>
    <property type="match status" value="1"/>
</dbReference>
<dbReference type="HAMAP" id="MF_01007">
    <property type="entry name" value="16SrRNA_methyltr_H"/>
    <property type="match status" value="1"/>
</dbReference>
<dbReference type="InterPro" id="IPR002903">
    <property type="entry name" value="RsmH"/>
</dbReference>
<dbReference type="InterPro" id="IPR023397">
    <property type="entry name" value="SAM-dep_MeTrfase_MraW_recog"/>
</dbReference>
<dbReference type="InterPro" id="IPR029063">
    <property type="entry name" value="SAM-dependent_MTases_sf"/>
</dbReference>
<dbReference type="NCBIfam" id="TIGR00006">
    <property type="entry name" value="16S rRNA (cytosine(1402)-N(4))-methyltransferase RsmH"/>
    <property type="match status" value="1"/>
</dbReference>
<dbReference type="PANTHER" id="PTHR11265:SF0">
    <property type="entry name" value="12S RRNA N4-METHYLCYTIDINE METHYLTRANSFERASE"/>
    <property type="match status" value="1"/>
</dbReference>
<dbReference type="PANTHER" id="PTHR11265">
    <property type="entry name" value="S-ADENOSYL-METHYLTRANSFERASE MRAW"/>
    <property type="match status" value="1"/>
</dbReference>
<dbReference type="Pfam" id="PF01795">
    <property type="entry name" value="Methyltransf_5"/>
    <property type="match status" value="1"/>
</dbReference>
<dbReference type="PIRSF" id="PIRSF004486">
    <property type="entry name" value="MraW"/>
    <property type="match status" value="1"/>
</dbReference>
<dbReference type="SUPFAM" id="SSF81799">
    <property type="entry name" value="Putative methyltransferase TM0872, insert domain"/>
    <property type="match status" value="1"/>
</dbReference>
<dbReference type="SUPFAM" id="SSF53335">
    <property type="entry name" value="S-adenosyl-L-methionine-dependent methyltransferases"/>
    <property type="match status" value="1"/>
</dbReference>
<organism>
    <name type="scientific">Wolbachia sp. subsp. Brugia malayi (strain TRS)</name>
    <dbReference type="NCBI Taxonomy" id="292805"/>
    <lineage>
        <taxon>Bacteria</taxon>
        <taxon>Pseudomonadati</taxon>
        <taxon>Pseudomonadota</taxon>
        <taxon>Alphaproteobacteria</taxon>
        <taxon>Rickettsiales</taxon>
        <taxon>Anaplasmataceae</taxon>
        <taxon>Wolbachieae</taxon>
        <taxon>Wolbachia</taxon>
    </lineage>
</organism>
<accession>Q5GTH5</accession>
<proteinExistence type="inferred from homology"/>
<keyword id="KW-0963">Cytoplasm</keyword>
<keyword id="KW-0489">Methyltransferase</keyword>
<keyword id="KW-1185">Reference proteome</keyword>
<keyword id="KW-0698">rRNA processing</keyword>
<keyword id="KW-0949">S-adenosyl-L-methionine</keyword>
<keyword id="KW-0808">Transferase</keyword>
<evidence type="ECO:0000255" key="1">
    <source>
        <dbReference type="HAMAP-Rule" id="MF_01007"/>
    </source>
</evidence>
<comment type="function">
    <text evidence="1">Specifically methylates the N4 position of cytidine in position 1402 (C1402) of 16S rRNA.</text>
</comment>
<comment type="catalytic activity">
    <reaction evidence="1">
        <text>cytidine(1402) in 16S rRNA + S-adenosyl-L-methionine = N(4)-methylcytidine(1402) in 16S rRNA + S-adenosyl-L-homocysteine + H(+)</text>
        <dbReference type="Rhea" id="RHEA:42928"/>
        <dbReference type="Rhea" id="RHEA-COMP:10286"/>
        <dbReference type="Rhea" id="RHEA-COMP:10287"/>
        <dbReference type="ChEBI" id="CHEBI:15378"/>
        <dbReference type="ChEBI" id="CHEBI:57856"/>
        <dbReference type="ChEBI" id="CHEBI:59789"/>
        <dbReference type="ChEBI" id="CHEBI:74506"/>
        <dbReference type="ChEBI" id="CHEBI:82748"/>
        <dbReference type="EC" id="2.1.1.199"/>
    </reaction>
</comment>
<comment type="subcellular location">
    <subcellularLocation>
        <location evidence="1">Cytoplasm</location>
    </subcellularLocation>
</comment>
<comment type="similarity">
    <text evidence="1">Belongs to the methyltransferase superfamily. RsmH family.</text>
</comment>
<feature type="chain" id="PRO_0000108750" description="Ribosomal RNA small subunit methyltransferase H">
    <location>
        <begin position="1"/>
        <end position="333"/>
    </location>
</feature>
<feature type="binding site" evidence="1">
    <location>
        <begin position="31"/>
        <end position="33"/>
    </location>
    <ligand>
        <name>S-adenosyl-L-methionine</name>
        <dbReference type="ChEBI" id="CHEBI:59789"/>
    </ligand>
</feature>
<feature type="binding site" evidence="1">
    <location>
        <position position="49"/>
    </location>
    <ligand>
        <name>S-adenosyl-L-methionine</name>
        <dbReference type="ChEBI" id="CHEBI:59789"/>
    </ligand>
</feature>
<feature type="binding site" evidence="1">
    <location>
        <position position="76"/>
    </location>
    <ligand>
        <name>S-adenosyl-L-methionine</name>
        <dbReference type="ChEBI" id="CHEBI:59789"/>
    </ligand>
</feature>
<feature type="binding site" evidence="1">
    <location>
        <position position="134"/>
    </location>
    <ligand>
        <name>S-adenosyl-L-methionine</name>
        <dbReference type="ChEBI" id="CHEBI:59789"/>
    </ligand>
</feature>
<feature type="binding site" evidence="1">
    <location>
        <position position="141"/>
    </location>
    <ligand>
        <name>S-adenosyl-L-methionine</name>
        <dbReference type="ChEBI" id="CHEBI:59789"/>
    </ligand>
</feature>
<gene>
    <name evidence="1" type="primary">rsmH</name>
    <name type="synonym">mraW</name>
    <name type="ordered locus">Wbm0107</name>
</gene>
<sequence length="333" mass="37118">MAHIPVLLKEMLLQLSPQNGGIYVDATFGAGGYSKAILESADCKVYAIDRDKTVIKFYEDLNIKYPSRVKLFIEKFSNIRSILDSNSLEYLVEPSAVSKLSSIISSGIQKKNIWISASSTGVTPSNTVDGVVFDIGVSSMQLDDGDRGFSFLHDGPLDMRMDNSSHTNASTFVNALREEEIANTIYNYGGERHSRRIARAIVNARKKKTIKTTFELANIVRSVVFRGKSKIDPATRTFQAIRIWVNDELGELEKGIKAASEILNKNGKLIVVTFHSLEDRIVKTFFKSLCEPRSIDCKVFSLLNKKMIKASAEEVNANPRSRSAKLRAIQRLS</sequence>
<reference key="1">
    <citation type="journal article" date="2005" name="PLoS Biol.">
        <title>The Wolbachia genome of Brugia malayi: endosymbiont evolution within a human pathogenic nematode.</title>
        <authorList>
            <person name="Foster J."/>
            <person name="Ganatra M."/>
            <person name="Kamal I."/>
            <person name="Ware J."/>
            <person name="Makarova K."/>
            <person name="Ivanova N."/>
            <person name="Bhattacharyya A."/>
            <person name="Kapatral V."/>
            <person name="Kumar S."/>
            <person name="Posfai J."/>
            <person name="Vincze T."/>
            <person name="Ingram J."/>
            <person name="Moran L."/>
            <person name="Lapidus A."/>
            <person name="Omelchenko M."/>
            <person name="Kyrpides N."/>
            <person name="Ghedin E."/>
            <person name="Wang S."/>
            <person name="Goltsman E."/>
            <person name="Joukov V."/>
            <person name="Ostrovskaya O."/>
            <person name="Tsukerman K."/>
            <person name="Mazur M."/>
            <person name="Comb D."/>
            <person name="Koonin E."/>
            <person name="Slatko B."/>
        </authorList>
    </citation>
    <scope>NUCLEOTIDE SEQUENCE [LARGE SCALE GENOMIC DNA]</scope>
    <source>
        <strain>TRS</strain>
    </source>
</reference>
<protein>
    <recommendedName>
        <fullName evidence="1">Ribosomal RNA small subunit methyltransferase H</fullName>
        <ecNumber evidence="1">2.1.1.199</ecNumber>
    </recommendedName>
    <alternativeName>
        <fullName evidence="1">16S rRNA m(4)C1402 methyltransferase</fullName>
    </alternativeName>
    <alternativeName>
        <fullName evidence="1">rRNA (cytosine-N(4)-)-methyltransferase RsmH</fullName>
    </alternativeName>
</protein>